<protein>
    <recommendedName>
        <fullName evidence="10">Autophagy-related protein 9B</fullName>
    </recommendedName>
    <alternativeName>
        <fullName evidence="9">APG9-like 2</fullName>
    </alternativeName>
    <alternativeName>
        <fullName evidence="8">Nitric oxide synthase 3-overlapping antisense gene protein</fullName>
    </alternativeName>
</protein>
<comment type="function">
    <text evidence="2 3 7">Phospholipid scramblase involved in autophagy by mediating autophagosomal membrane expansion (PubMed:15755735). Cycles between the preautophagosomal structure/phagophore assembly site (PAS) and the cytoplasmic vesicle pool and supplies membrane for the growing autophagosome. Lipid scramblase activity plays a key role in preautophagosomal structure/phagophore assembly by distributing the phospholipids that arrive through ATG2 (ATG2A or ATG2B) from the cytoplasmic to the luminal leaflet of the bilayer, thereby driving autophagosomal membrane expansion (By similarity). In addition to autophagy, also plays a role in necrotic cell death (By similarity).</text>
</comment>
<comment type="catalytic activity">
    <reaction evidence="3">
        <text>a 1,2-diacyl-sn-glycero-3-phosphocholine(in) = a 1,2-diacyl-sn-glycero-3-phosphocholine(out)</text>
        <dbReference type="Rhea" id="RHEA:38571"/>
        <dbReference type="ChEBI" id="CHEBI:57643"/>
    </reaction>
</comment>
<comment type="catalytic activity">
    <reaction evidence="3">
        <text>a 1,2-diacyl-sn-glycero-3-phospho-L-serine(in) = a 1,2-diacyl-sn-glycero-3-phospho-L-serine(out)</text>
        <dbReference type="Rhea" id="RHEA:38663"/>
        <dbReference type="ChEBI" id="CHEBI:57262"/>
    </reaction>
</comment>
<comment type="catalytic activity">
    <reaction evidence="3">
        <text>a 1,2-diacyl-sn-glycero-3-phosphoethanolamine(in) = a 1,2-diacyl-sn-glycero-3-phosphoethanolamine(out)</text>
        <dbReference type="Rhea" id="RHEA:38895"/>
        <dbReference type="ChEBI" id="CHEBI:64612"/>
    </reaction>
</comment>
<comment type="subunit">
    <text evidence="3">Homotrimer; forms a homotrimer with a central pore that forms a path between the two membrane leaflets.</text>
</comment>
<comment type="subcellular location">
    <subcellularLocation>
        <location evidence="7">Preautophagosomal structure membrane</location>
        <topology evidence="7">Multi-pass membrane protein</topology>
    </subcellularLocation>
    <text evidence="1">Under amino acid starvation or rapamycin treatment, redistributes from a juxtanuclear clustered pool to a dispersed peripheral cytosolic pool. The starvation-induced redistribution depends on ULK1 and ATG13.</text>
</comment>
<comment type="tissue specificity">
    <text evidence="6 7">Expressed in heart, brain, and placenta and testis.</text>
</comment>
<comment type="domain">
    <text evidence="3">Forms a homotrimer with a solvated central pore, which is connected laterally to the cytosol through the cavity within each protomer. Acts as a lipid scramblase that uses its central pore to function: the central pore opens laterally to accommodate lipid headgroups, thereby enabling lipid flipping and redistribution of lipids added to the outer leaflet of ATG9B-containing vesicles, thereby enabling growth into autophagosomes.</text>
</comment>
<comment type="domain">
    <text evidence="3">The tyrosine-based sorting signal motif, also named YXX-psi motif, promotes interaction with the AP-4 complex.</text>
</comment>
<comment type="similarity">
    <text evidence="10">Belongs to the ATG9 family.</text>
</comment>
<comment type="sequence caution" evidence="10">
    <conflict type="erroneous initiation">
        <sequence resource="EMBL-CDS" id="AAS87213"/>
    </conflict>
</comment>
<proteinExistence type="evidence at transcript level"/>
<reference key="1">
    <citation type="journal article" date="2004" name="J. Biol. Chem.">
        <title>Post-transcriptional regulation of endothelial nitric-oxide synthase by an overlapping antisense mRNA transcript.</title>
        <authorList>
            <person name="Robb G.B."/>
            <person name="Carson A.R."/>
            <person name="Tai S.C."/>
            <person name="Fish J.E."/>
            <person name="Singh S."/>
            <person name="Yamada T."/>
            <person name="Scherer S.W."/>
            <person name="Nakabayashi K."/>
            <person name="Marsden P.A."/>
        </authorList>
    </citation>
    <scope>NUCLEOTIDE SEQUENCE [MRNA]</scope>
    <scope>TISSUE SPECIFICITY</scope>
    <source>
        <strain>129S6/SvEvTac</strain>
        <strain>CD-1</strain>
        <tissue>Placenta</tissue>
    </source>
</reference>
<reference key="2">
    <citation type="journal article" date="2009" name="PLoS Biol.">
        <title>Lineage-specific biology revealed by a finished genome assembly of the mouse.</title>
        <authorList>
            <person name="Church D.M."/>
            <person name="Goodstadt L."/>
            <person name="Hillier L.W."/>
            <person name="Zody M.C."/>
            <person name="Goldstein S."/>
            <person name="She X."/>
            <person name="Bult C.J."/>
            <person name="Agarwala R."/>
            <person name="Cherry J.L."/>
            <person name="DiCuccio M."/>
            <person name="Hlavina W."/>
            <person name="Kapustin Y."/>
            <person name="Meric P."/>
            <person name="Maglott D."/>
            <person name="Birtle Z."/>
            <person name="Marques A.C."/>
            <person name="Graves T."/>
            <person name="Zhou S."/>
            <person name="Teague B."/>
            <person name="Potamousis K."/>
            <person name="Churas C."/>
            <person name="Place M."/>
            <person name="Herschleb J."/>
            <person name="Runnheim R."/>
            <person name="Forrest D."/>
            <person name="Amos-Landgraf J."/>
            <person name="Schwartz D.C."/>
            <person name="Cheng Z."/>
            <person name="Lindblad-Toh K."/>
            <person name="Eichler E.E."/>
            <person name="Ponting C.P."/>
        </authorList>
    </citation>
    <scope>NUCLEOTIDE SEQUENCE [LARGE SCALE GENOMIC DNA]</scope>
    <source>
        <strain>C57BL/6J</strain>
    </source>
</reference>
<reference key="3">
    <citation type="journal article" date="2005" name="J. Biol. Chem.">
        <title>Endothelial nitric-oxide synthase antisense (NOS3AS) gene encodes an autophagy-related protein (APG9-like2) highly expressed in trophoblast.</title>
        <authorList>
            <person name="Yamada T."/>
            <person name="Carson A.R."/>
            <person name="Caniggia I."/>
            <person name="Umebayashi K."/>
            <person name="Yoshimori T."/>
            <person name="Nakabayashi K."/>
            <person name="Scherer S.W."/>
        </authorList>
    </citation>
    <scope>FUNCTION</scope>
    <scope>SUBCELLULAR LOCATION</scope>
    <scope>TISSUE SPECIFICITY</scope>
</reference>
<keyword id="KW-0072">Autophagy</keyword>
<keyword id="KW-0445">Lipid transport</keyword>
<keyword id="KW-0472">Membrane</keyword>
<keyword id="KW-1185">Reference proteome</keyword>
<keyword id="KW-0812">Transmembrane</keyword>
<keyword id="KW-1133">Transmembrane helix</keyword>
<keyword id="KW-0813">Transport</keyword>
<sequence length="922" mass="101913">MVRRTGWGGSRRQRGRWGDLGPSSVPLLPMALPLPASPCRGTGGRRISVFSLSPAPRTRSCSSSVFPPASGSPCLVIQEAGASQTPHNVLPTPTTPSTQAHPTMIHTSASPSWGSHSTPPLASATPPPSCPRPQDHPGLRMGPLIPEQDYERLEDCDPEGSQDSPIHGEDHQPLLHVPEGLRGSWHHIQNLDSFFTKIYSYHQRNGFACILLEDVFQLGQFIFIVTFTTFLLRCVDYNVLFNNQPKNHTRRGPLHSKVTLSDAILPSAQCAEKIHDSPLLVFLLVLAAGFWLFQLLRSVCNLFSYWDIQVFYREALHIPPEELSSVPWAEVQSRLLELQRSGGLCVQPRPLTELDVHHRILRYTNYQVALANKGLLPARCPLPWGSSAAFLSRGLALNVDLLLFRGPFSLFRGGWELPEAYKRSDLRGVLANRWRRTVLLLAAVNLALSPLVLAWQVLHAFYSHVELLRREPGAFGARRWSRLARLQLRHFNELPHELRARLGRAYRPAAAFLRAAEPPAPLRALLARQLVFFSGALFAALLVLTIYDEDVLAVEHVLTTMTALGVTATVARSFIPEEQCQGRSSQLLLQAALAHMHYLPEEPGATGARASSYWQMAQLLQYRAVSLLEELLSPLLTPLFLLFWFRPRALEIIDFFHHFTVDVAGVGDICSFALMDVKRHGHPQWLSEGQTEASLSQRAEDGKTELSLMRFSLAHPQWQPPGHSSKFLGHLRGRVQQDAAAWGAPSTRSPPTPGVLSDCTSPLPEAFLANLLVNPRPPQRDLSPTAPCPAAATASLLASISRMVQDPSCVSPGGTGGQKLTQLPELVSAEMSLHAIYLHQLHQQQQQELWGEASASSPSRPWSSPSQPGSPDEEKPSWSSDGSSPASSPRQQWGTQRAQNLFPKGFQENTDTQKEPLTGPLH</sequence>
<feature type="chain" id="PRO_0000314868" description="Autophagy-related protein 9B">
    <location>
        <begin position="1"/>
        <end position="922"/>
    </location>
</feature>
<feature type="topological domain" description="Cytoplasmic" evidence="10">
    <location>
        <begin position="1"/>
        <end position="206"/>
    </location>
</feature>
<feature type="transmembrane region" description="Helical" evidence="4">
    <location>
        <begin position="207"/>
        <end position="227"/>
    </location>
</feature>
<feature type="topological domain" description="Lumenal" evidence="10">
    <location>
        <begin position="228"/>
        <end position="275"/>
    </location>
</feature>
<feature type="transmembrane region" description="Helical" evidence="4">
    <location>
        <begin position="276"/>
        <end position="296"/>
    </location>
</feature>
<feature type="topological domain" description="Cytoplasmic" evidence="10">
    <location>
        <begin position="297"/>
        <end position="437"/>
    </location>
</feature>
<feature type="intramembrane region" evidence="3">
    <location>
        <begin position="438"/>
        <end position="458"/>
    </location>
</feature>
<feature type="topological domain" description="Cytoplasmic" evidence="10">
    <location>
        <begin position="459"/>
        <end position="523"/>
    </location>
</feature>
<feature type="transmembrane region" description="Helical" evidence="4">
    <location>
        <begin position="524"/>
        <end position="544"/>
    </location>
</feature>
<feature type="topological domain" description="Lumenal" evidence="10">
    <location>
        <begin position="545"/>
        <end position="550"/>
    </location>
</feature>
<feature type="transmembrane region" description="Helical" evidence="4">
    <location>
        <begin position="551"/>
        <end position="571"/>
    </location>
</feature>
<feature type="topological domain" description="Cytoplasmic" evidence="10">
    <location>
        <begin position="572"/>
        <end position="624"/>
    </location>
</feature>
<feature type="intramembrane region" evidence="3">
    <location>
        <begin position="625"/>
        <end position="645"/>
    </location>
</feature>
<feature type="topological domain" description="Cytoplasmic" evidence="10">
    <location>
        <begin position="646"/>
        <end position="922"/>
    </location>
</feature>
<feature type="region of interest" description="Disordered" evidence="5">
    <location>
        <begin position="1"/>
        <end position="22"/>
    </location>
</feature>
<feature type="region of interest" description="Disordered" evidence="5">
    <location>
        <begin position="85"/>
        <end position="144"/>
    </location>
</feature>
<feature type="region of interest" description="Disordered" evidence="5">
    <location>
        <begin position="848"/>
        <end position="922"/>
    </location>
</feature>
<feature type="short sequence motif" description="Tyrosine-based sorting signal" evidence="3">
    <location>
        <begin position="150"/>
        <end position="153"/>
    </location>
</feature>
<feature type="compositionally biased region" description="Polar residues" evidence="5">
    <location>
        <begin position="85"/>
        <end position="114"/>
    </location>
</feature>
<feature type="compositionally biased region" description="Low complexity" evidence="5">
    <location>
        <begin position="115"/>
        <end position="124"/>
    </location>
</feature>
<feature type="compositionally biased region" description="Low complexity" evidence="5">
    <location>
        <begin position="854"/>
        <end position="870"/>
    </location>
</feature>
<feature type="compositionally biased region" description="Low complexity" evidence="5">
    <location>
        <begin position="877"/>
        <end position="889"/>
    </location>
</feature>
<feature type="compositionally biased region" description="Polar residues" evidence="5">
    <location>
        <begin position="890"/>
        <end position="899"/>
    </location>
</feature>
<feature type="sequence conflict" description="In Ref. 1; AAS72555/AAS87214." evidence="10" ref="1">
    <original>P</original>
    <variation>H</variation>
    <location>
        <position position="29"/>
    </location>
</feature>
<dbReference type="EMBL" id="AY495541">
    <property type="protein sequence ID" value="AAS72555.1"/>
    <property type="molecule type" value="mRNA"/>
</dbReference>
<dbReference type="EMBL" id="AY515312">
    <property type="protein sequence ID" value="AAS87213.1"/>
    <property type="status" value="ALT_INIT"/>
    <property type="molecule type" value="mRNA"/>
</dbReference>
<dbReference type="EMBL" id="AY515313">
    <property type="protein sequence ID" value="AAS87214.1"/>
    <property type="molecule type" value="mRNA"/>
</dbReference>
<dbReference type="EMBL" id="AC113055">
    <property type="status" value="NOT_ANNOTATED_CDS"/>
    <property type="molecule type" value="Genomic_DNA"/>
</dbReference>
<dbReference type="EMBL" id="BK004021">
    <property type="protein sequence ID" value="DAA05202.1"/>
    <property type="molecule type" value="mRNA"/>
</dbReference>
<dbReference type="CCDS" id="CCDS39027.1"/>
<dbReference type="RefSeq" id="NP_001002897.2">
    <property type="nucleotide sequence ID" value="NM_001002897.3"/>
</dbReference>
<dbReference type="SMR" id="Q6EBV9"/>
<dbReference type="FunCoup" id="Q6EBV9">
    <property type="interactions" value="1204"/>
</dbReference>
<dbReference type="STRING" id="10090.ENSMUSP00000051864"/>
<dbReference type="GlyGen" id="Q6EBV9">
    <property type="glycosylation" value="2 sites"/>
</dbReference>
<dbReference type="iPTMnet" id="Q6EBV9"/>
<dbReference type="PhosphoSitePlus" id="Q6EBV9"/>
<dbReference type="PaxDb" id="10090-ENSMUSP00000051864"/>
<dbReference type="ProteomicsDB" id="277191"/>
<dbReference type="Antibodypedia" id="32933">
    <property type="antibodies" value="245 antibodies from 25 providers"/>
</dbReference>
<dbReference type="DNASU" id="213948"/>
<dbReference type="Ensembl" id="ENSMUST00000059401.7">
    <property type="protein sequence ID" value="ENSMUSP00000051864.7"/>
    <property type="gene ID" value="ENSMUSG00000038295.15"/>
</dbReference>
<dbReference type="GeneID" id="213948"/>
<dbReference type="KEGG" id="mmu:213948"/>
<dbReference type="UCSC" id="uc033ihy.1">
    <property type="organism name" value="mouse"/>
</dbReference>
<dbReference type="AGR" id="MGI:2685420"/>
<dbReference type="CTD" id="285973"/>
<dbReference type="MGI" id="MGI:2685420">
    <property type="gene designation" value="Atg9b"/>
</dbReference>
<dbReference type="VEuPathDB" id="HostDB:ENSMUSG00000038295"/>
<dbReference type="eggNOG" id="KOG2173">
    <property type="taxonomic scope" value="Eukaryota"/>
</dbReference>
<dbReference type="GeneTree" id="ENSGT00390000014839"/>
<dbReference type="HOGENOM" id="CLU_006200_2_0_1"/>
<dbReference type="InParanoid" id="Q6EBV9"/>
<dbReference type="OMA" id="AQPCHSA"/>
<dbReference type="OrthoDB" id="2020634at2759"/>
<dbReference type="PhylomeDB" id="Q6EBV9"/>
<dbReference type="TreeFam" id="TF313665"/>
<dbReference type="Reactome" id="R-MMU-1632852">
    <property type="pathway name" value="Macroautophagy"/>
</dbReference>
<dbReference type="BioGRID-ORCS" id="213948">
    <property type="hits" value="1 hit in 79 CRISPR screens"/>
</dbReference>
<dbReference type="PRO" id="PR:Q6EBV9"/>
<dbReference type="Proteomes" id="UP000000589">
    <property type="component" value="Chromosome 5"/>
</dbReference>
<dbReference type="RNAct" id="Q6EBV9">
    <property type="molecule type" value="protein"/>
</dbReference>
<dbReference type="Bgee" id="ENSMUSG00000038295">
    <property type="expression patterns" value="Expressed in lip and 103 other cell types or tissues"/>
</dbReference>
<dbReference type="GO" id="GO:0005776">
    <property type="term" value="C:autophagosome"/>
    <property type="evidence" value="ECO:0000314"/>
    <property type="project" value="MGI"/>
</dbReference>
<dbReference type="GO" id="GO:0005737">
    <property type="term" value="C:cytoplasm"/>
    <property type="evidence" value="ECO:0000314"/>
    <property type="project" value="MGI"/>
</dbReference>
<dbReference type="GO" id="GO:0005789">
    <property type="term" value="C:endoplasmic reticulum membrane"/>
    <property type="evidence" value="ECO:0000250"/>
    <property type="project" value="UniProtKB"/>
</dbReference>
<dbReference type="GO" id="GO:0000139">
    <property type="term" value="C:Golgi membrane"/>
    <property type="evidence" value="ECO:0000250"/>
    <property type="project" value="UniProtKB"/>
</dbReference>
<dbReference type="GO" id="GO:0034045">
    <property type="term" value="C:phagophore assembly site membrane"/>
    <property type="evidence" value="ECO:0007669"/>
    <property type="project" value="UniProtKB-SubCell"/>
</dbReference>
<dbReference type="GO" id="GO:0055038">
    <property type="term" value="C:recycling endosome membrane"/>
    <property type="evidence" value="ECO:0000250"/>
    <property type="project" value="UniProtKB"/>
</dbReference>
<dbReference type="GO" id="GO:0005802">
    <property type="term" value="C:trans-Golgi network"/>
    <property type="evidence" value="ECO:0000250"/>
    <property type="project" value="UniProtKB"/>
</dbReference>
<dbReference type="GO" id="GO:0017128">
    <property type="term" value="F:phospholipid scramblase activity"/>
    <property type="evidence" value="ECO:0000250"/>
    <property type="project" value="UniProtKB"/>
</dbReference>
<dbReference type="GO" id="GO:0000045">
    <property type="term" value="P:autophagosome assembly"/>
    <property type="evidence" value="ECO:0000250"/>
    <property type="project" value="UniProtKB"/>
</dbReference>
<dbReference type="GO" id="GO:0060349">
    <property type="term" value="P:bone morphogenesis"/>
    <property type="evidence" value="ECO:0000250"/>
    <property type="project" value="UniProtKB"/>
</dbReference>
<dbReference type="GO" id="GO:0097300">
    <property type="term" value="P:programmed necrotic cell death"/>
    <property type="evidence" value="ECO:0000250"/>
    <property type="project" value="UniProtKB"/>
</dbReference>
<dbReference type="InterPro" id="IPR007241">
    <property type="entry name" value="Autophagy-rel_prot_9"/>
</dbReference>
<dbReference type="PANTHER" id="PTHR13038">
    <property type="entry name" value="APG9 AUTOPHAGY 9"/>
    <property type="match status" value="1"/>
</dbReference>
<dbReference type="PANTHER" id="PTHR13038:SF14">
    <property type="entry name" value="AUTOPHAGY-RELATED PROTEIN 9B"/>
    <property type="match status" value="1"/>
</dbReference>
<dbReference type="Pfam" id="PF04109">
    <property type="entry name" value="ATG9"/>
    <property type="match status" value="1"/>
</dbReference>
<name>ATG9B_MOUSE</name>
<accession>Q6EBV9</accession>
<accession>F8VQL8</accession>
<accession>Q674R6</accession>
<gene>
    <name evidence="11" type="primary">Atg9b</name>
    <name evidence="9" type="synonym">Apg9l2</name>
    <name evidence="8" type="synonym">Nos3as</name>
</gene>
<evidence type="ECO:0000250" key="1">
    <source>
        <dbReference type="UniProtKB" id="Q674R7"/>
    </source>
</evidence>
<evidence type="ECO:0000250" key="2">
    <source>
        <dbReference type="UniProtKB" id="Q68FE2"/>
    </source>
</evidence>
<evidence type="ECO:0000250" key="3">
    <source>
        <dbReference type="UniProtKB" id="Q7Z3C6"/>
    </source>
</evidence>
<evidence type="ECO:0000255" key="4"/>
<evidence type="ECO:0000256" key="5">
    <source>
        <dbReference type="SAM" id="MobiDB-lite"/>
    </source>
</evidence>
<evidence type="ECO:0000269" key="6">
    <source>
    </source>
</evidence>
<evidence type="ECO:0000269" key="7">
    <source>
    </source>
</evidence>
<evidence type="ECO:0000303" key="8">
    <source>
    </source>
</evidence>
<evidence type="ECO:0000303" key="9">
    <source>
    </source>
</evidence>
<evidence type="ECO:0000305" key="10"/>
<evidence type="ECO:0000312" key="11">
    <source>
        <dbReference type="MGI" id="MGI:2685420"/>
    </source>
</evidence>
<organism>
    <name type="scientific">Mus musculus</name>
    <name type="common">Mouse</name>
    <dbReference type="NCBI Taxonomy" id="10090"/>
    <lineage>
        <taxon>Eukaryota</taxon>
        <taxon>Metazoa</taxon>
        <taxon>Chordata</taxon>
        <taxon>Craniata</taxon>
        <taxon>Vertebrata</taxon>
        <taxon>Euteleostomi</taxon>
        <taxon>Mammalia</taxon>
        <taxon>Eutheria</taxon>
        <taxon>Euarchontoglires</taxon>
        <taxon>Glires</taxon>
        <taxon>Rodentia</taxon>
        <taxon>Myomorpha</taxon>
        <taxon>Muroidea</taxon>
        <taxon>Muridae</taxon>
        <taxon>Murinae</taxon>
        <taxon>Mus</taxon>
        <taxon>Mus</taxon>
    </lineage>
</organism>